<proteinExistence type="evidence at protein level"/>
<organism>
    <name type="scientific">Methanocaldococcus jannaschii (strain ATCC 43067 / DSM 2661 / JAL-1 / JCM 10045 / NBRC 100440)</name>
    <name type="common">Methanococcus jannaschii</name>
    <dbReference type="NCBI Taxonomy" id="243232"/>
    <lineage>
        <taxon>Archaea</taxon>
        <taxon>Methanobacteriati</taxon>
        <taxon>Methanobacteriota</taxon>
        <taxon>Methanomada group</taxon>
        <taxon>Methanococci</taxon>
        <taxon>Methanococcales</taxon>
        <taxon>Methanocaldococcaceae</taxon>
        <taxon>Methanocaldococcus</taxon>
    </lineage>
</organism>
<accession>Q58043</accession>
<dbReference type="EC" id="3.5.4.10"/>
<dbReference type="EMBL" id="L77117">
    <property type="protein sequence ID" value="AAB98620.1"/>
    <property type="status" value="ALT_INIT"/>
    <property type="molecule type" value="Genomic_DNA"/>
</dbReference>
<dbReference type="PIR" id="B64378">
    <property type="entry name" value="B64378"/>
</dbReference>
<dbReference type="RefSeq" id="WP_064496562.1">
    <property type="nucleotide sequence ID" value="NC_000909.1"/>
</dbReference>
<dbReference type="SMR" id="Q58043"/>
<dbReference type="STRING" id="243232.MJ_0626"/>
<dbReference type="PaxDb" id="243232-MJ_0626"/>
<dbReference type="EnsemblBacteria" id="AAB98620">
    <property type="protein sequence ID" value="AAB98620"/>
    <property type="gene ID" value="MJ_0626"/>
</dbReference>
<dbReference type="GeneID" id="1451492"/>
<dbReference type="KEGG" id="mja:MJ_0626"/>
<dbReference type="eggNOG" id="arCOG04727">
    <property type="taxonomic scope" value="Archaea"/>
</dbReference>
<dbReference type="HOGENOM" id="CLU_1352116_0_0_2"/>
<dbReference type="InParanoid" id="Q58043"/>
<dbReference type="OrthoDB" id="92928at2157"/>
<dbReference type="PhylomeDB" id="Q58043"/>
<dbReference type="BioCyc" id="MetaCyc:MONOMER-14617"/>
<dbReference type="BRENDA" id="3.5.4.10">
    <property type="organism ID" value="3260"/>
</dbReference>
<dbReference type="UniPathway" id="UPA00074">
    <property type="reaction ID" value="UER00135"/>
</dbReference>
<dbReference type="Proteomes" id="UP000000805">
    <property type="component" value="Chromosome"/>
</dbReference>
<dbReference type="GO" id="GO:0003937">
    <property type="term" value="F:IMP cyclohydrolase activity"/>
    <property type="evidence" value="ECO:0007669"/>
    <property type="project" value="UniProtKB-UniRule"/>
</dbReference>
<dbReference type="GO" id="GO:0006189">
    <property type="term" value="P:'de novo' IMP biosynthetic process"/>
    <property type="evidence" value="ECO:0007669"/>
    <property type="project" value="UniProtKB-UniRule"/>
</dbReference>
<dbReference type="Gene3D" id="3.60.20.20">
    <property type="entry name" value="Inosine monophosphate cyclohydrolase-like"/>
    <property type="match status" value="1"/>
</dbReference>
<dbReference type="HAMAP" id="MF_00705">
    <property type="entry name" value="IMP_cyclohydrol"/>
    <property type="match status" value="1"/>
</dbReference>
<dbReference type="InterPro" id="IPR010191">
    <property type="entry name" value="IMP_cyclohydrolase"/>
</dbReference>
<dbReference type="InterPro" id="IPR020600">
    <property type="entry name" value="IMP_cyclohydrolase-like"/>
</dbReference>
<dbReference type="InterPro" id="IPR036795">
    <property type="entry name" value="IMP_cyclohydrolase-like_sf"/>
</dbReference>
<dbReference type="NCBIfam" id="NF003167">
    <property type="entry name" value="PRK04151.1"/>
    <property type="match status" value="1"/>
</dbReference>
<dbReference type="NCBIfam" id="TIGR01922">
    <property type="entry name" value="purO_arch"/>
    <property type="match status" value="1"/>
</dbReference>
<dbReference type="Pfam" id="PF07826">
    <property type="entry name" value="IMP_cyclohyd"/>
    <property type="match status" value="1"/>
</dbReference>
<dbReference type="PIRSF" id="PIRSF004866">
    <property type="entry name" value="IMP_cclhdr_arch"/>
    <property type="match status" value="1"/>
</dbReference>
<dbReference type="SUPFAM" id="SSF75569">
    <property type="entry name" value="Archaeal IMP cyclohydrolase PurO"/>
    <property type="match status" value="1"/>
</dbReference>
<gene>
    <name type="primary">purO</name>
    <name type="ordered locus">MJ0626</name>
</gene>
<protein>
    <recommendedName>
        <fullName>IMP cyclohydrolase</fullName>
        <ecNumber>3.5.4.10</ecNumber>
    </recommendedName>
    <alternativeName>
        <fullName>IMP synthase</fullName>
    </alternativeName>
    <alternativeName>
        <fullName>Inosinicase</fullName>
    </alternativeName>
</protein>
<keyword id="KW-0378">Hydrolase</keyword>
<keyword id="KW-0658">Purine biosynthesis</keyword>
<keyword id="KW-1185">Reference proteome</keyword>
<sequence length="202" mass="22941">MYIGRFLVVGKTKEGKPFAAYRVSSRSFPNREAKKMDDNTVAIIPKDLNEMFKNPYITYNCIKVIDKTIVVSNGTHTDFIAEKLHFGKRDALAYVLAVMDYEKDDYKTPRIAAILDENECYMGYVAHDDIRVKKVELKDGKGYYLGVYNACKIDENQIIDIKGETAEEIADYILNYEEFEHPVACAVAVIDKDGIKIATKGK</sequence>
<feature type="chain" id="PRO_0000145795" description="IMP cyclohydrolase">
    <location>
        <begin position="1"/>
        <end position="202"/>
    </location>
</feature>
<comment type="function">
    <text>Catalyzes the cyclization of 5-formylamidoimidazole-4-carboxamide ribonucleotide to IMP.</text>
</comment>
<comment type="catalytic activity">
    <reaction>
        <text>IMP + H2O = 5-formamido-1-(5-phospho-D-ribosyl)imidazole-4-carboxamide</text>
        <dbReference type="Rhea" id="RHEA:18445"/>
        <dbReference type="ChEBI" id="CHEBI:15377"/>
        <dbReference type="ChEBI" id="CHEBI:58053"/>
        <dbReference type="ChEBI" id="CHEBI:58467"/>
        <dbReference type="EC" id="3.5.4.10"/>
    </reaction>
</comment>
<comment type="biophysicochemical properties">
    <phDependence>
        <text>Optimum pH is 6-8.5.</text>
    </phDependence>
    <temperatureDependence>
        <text>Fully active at 80 degrees Celsius. Gradually loses some activity from 90 to 100 degrees Celsius.</text>
    </temperatureDependence>
</comment>
<comment type="pathway">
    <text>Purine metabolism; IMP biosynthesis via de novo pathway; IMP from 5-formamido-1-(5-phospho-D-ribosyl)imidazole-4-carboxamide: step 1/1.</text>
</comment>
<comment type="similarity">
    <text evidence="1">Belongs to the archaeal IMP cyclohydrolase family.</text>
</comment>
<comment type="sequence caution" evidence="1">
    <conflict type="erroneous initiation">
        <sequence resource="EMBL-CDS" id="AAB98620"/>
    </conflict>
</comment>
<name>PURO_METJA</name>
<evidence type="ECO:0000305" key="1"/>
<reference key="1">
    <citation type="journal article" date="1996" name="Science">
        <title>Complete genome sequence of the methanogenic archaeon, Methanococcus jannaschii.</title>
        <authorList>
            <person name="Bult C.J."/>
            <person name="White O."/>
            <person name="Olsen G.J."/>
            <person name="Zhou L."/>
            <person name="Fleischmann R.D."/>
            <person name="Sutton G.G."/>
            <person name="Blake J.A."/>
            <person name="FitzGerald L.M."/>
            <person name="Clayton R.A."/>
            <person name="Gocayne J.D."/>
            <person name="Kerlavage A.R."/>
            <person name="Dougherty B.A."/>
            <person name="Tomb J.-F."/>
            <person name="Adams M.D."/>
            <person name="Reich C.I."/>
            <person name="Overbeek R."/>
            <person name="Kirkness E.F."/>
            <person name="Weinstock K.G."/>
            <person name="Merrick J.M."/>
            <person name="Glodek A."/>
            <person name="Scott J.L."/>
            <person name="Geoghagen N.S.M."/>
            <person name="Weidman J.F."/>
            <person name="Fuhrmann J.L."/>
            <person name="Nguyen D."/>
            <person name="Utterback T.R."/>
            <person name="Kelley J.M."/>
            <person name="Peterson J.D."/>
            <person name="Sadow P.W."/>
            <person name="Hanna M.C."/>
            <person name="Cotton M.D."/>
            <person name="Roberts K.M."/>
            <person name="Hurst M.A."/>
            <person name="Kaine B.P."/>
            <person name="Borodovsky M."/>
            <person name="Klenk H.-P."/>
            <person name="Fraser C.M."/>
            <person name="Smith H.O."/>
            <person name="Woese C.R."/>
            <person name="Venter J.C."/>
        </authorList>
    </citation>
    <scope>NUCLEOTIDE SEQUENCE [LARGE SCALE GENOMIC DNA]</scope>
    <source>
        <strain>ATCC 43067 / DSM 2661 / JAL-1 / JCM 10045 / NBRC 100440</strain>
    </source>
</reference>
<reference key="2">
    <citation type="journal article" date="2002" name="J. Bacteriol.">
        <title>New class of IMP cyclohydrolases in Methanococcus jannaschii.</title>
        <authorList>
            <person name="Graupner M."/>
            <person name="Xu H."/>
            <person name="White R.H."/>
        </authorList>
    </citation>
    <scope>CHARACTERIZATION</scope>
</reference>